<reference key="1">
    <citation type="journal article" date="2001" name="Genome Res.">
        <title>Towards a catalog of human genes and proteins: sequencing and analysis of 500 novel complete protein coding human cDNAs.</title>
        <authorList>
            <person name="Wiemann S."/>
            <person name="Weil B."/>
            <person name="Wellenreuther R."/>
            <person name="Gassenhuber J."/>
            <person name="Glassl S."/>
            <person name="Ansorge W."/>
            <person name="Boecher M."/>
            <person name="Bloecker H."/>
            <person name="Bauersachs S."/>
            <person name="Blum H."/>
            <person name="Lauber J."/>
            <person name="Duesterhoeft A."/>
            <person name="Beyer A."/>
            <person name="Koehrer K."/>
            <person name="Strack N."/>
            <person name="Mewes H.-W."/>
            <person name="Ottenwaelder B."/>
            <person name="Obermaier B."/>
            <person name="Tampe J."/>
            <person name="Heubner D."/>
            <person name="Wambutt R."/>
            <person name="Korn B."/>
            <person name="Klein M."/>
            <person name="Poustka A."/>
        </authorList>
    </citation>
    <scope>NUCLEOTIDE SEQUENCE [LARGE SCALE MRNA]</scope>
    <source>
        <tissue>Brain</tissue>
    </source>
</reference>
<reference key="2">
    <citation type="journal article" date="2004" name="Nat. Genet.">
        <title>Complete sequencing and characterization of 21,243 full-length human cDNAs.</title>
        <authorList>
            <person name="Ota T."/>
            <person name="Suzuki Y."/>
            <person name="Nishikawa T."/>
            <person name="Otsuki T."/>
            <person name="Sugiyama T."/>
            <person name="Irie R."/>
            <person name="Wakamatsu A."/>
            <person name="Hayashi K."/>
            <person name="Sato H."/>
            <person name="Nagai K."/>
            <person name="Kimura K."/>
            <person name="Makita H."/>
            <person name="Sekine M."/>
            <person name="Obayashi M."/>
            <person name="Nishi T."/>
            <person name="Shibahara T."/>
            <person name="Tanaka T."/>
            <person name="Ishii S."/>
            <person name="Yamamoto J."/>
            <person name="Saito K."/>
            <person name="Kawai Y."/>
            <person name="Isono Y."/>
            <person name="Nakamura Y."/>
            <person name="Nagahari K."/>
            <person name="Murakami K."/>
            <person name="Yasuda T."/>
            <person name="Iwayanagi T."/>
            <person name="Wagatsuma M."/>
            <person name="Shiratori A."/>
            <person name="Sudo H."/>
            <person name="Hosoiri T."/>
            <person name="Kaku Y."/>
            <person name="Kodaira H."/>
            <person name="Kondo H."/>
            <person name="Sugawara M."/>
            <person name="Takahashi M."/>
            <person name="Kanda K."/>
            <person name="Yokoi T."/>
            <person name="Furuya T."/>
            <person name="Kikkawa E."/>
            <person name="Omura Y."/>
            <person name="Abe K."/>
            <person name="Kamihara K."/>
            <person name="Katsuta N."/>
            <person name="Sato K."/>
            <person name="Tanikawa M."/>
            <person name="Yamazaki M."/>
            <person name="Ninomiya K."/>
            <person name="Ishibashi T."/>
            <person name="Yamashita H."/>
            <person name="Murakawa K."/>
            <person name="Fujimori K."/>
            <person name="Tanai H."/>
            <person name="Kimata M."/>
            <person name="Watanabe M."/>
            <person name="Hiraoka S."/>
            <person name="Chiba Y."/>
            <person name="Ishida S."/>
            <person name="Ono Y."/>
            <person name="Takiguchi S."/>
            <person name="Watanabe S."/>
            <person name="Yosida M."/>
            <person name="Hotuta T."/>
            <person name="Kusano J."/>
            <person name="Kanehori K."/>
            <person name="Takahashi-Fujii A."/>
            <person name="Hara H."/>
            <person name="Tanase T.-O."/>
            <person name="Nomura Y."/>
            <person name="Togiya S."/>
            <person name="Komai F."/>
            <person name="Hara R."/>
            <person name="Takeuchi K."/>
            <person name="Arita M."/>
            <person name="Imose N."/>
            <person name="Musashino K."/>
            <person name="Yuuki H."/>
            <person name="Oshima A."/>
            <person name="Sasaki N."/>
            <person name="Aotsuka S."/>
            <person name="Yoshikawa Y."/>
            <person name="Matsunawa H."/>
            <person name="Ichihara T."/>
            <person name="Shiohata N."/>
            <person name="Sano S."/>
            <person name="Moriya S."/>
            <person name="Momiyama H."/>
            <person name="Satoh N."/>
            <person name="Takami S."/>
            <person name="Terashima Y."/>
            <person name="Suzuki O."/>
            <person name="Nakagawa S."/>
            <person name="Senoh A."/>
            <person name="Mizoguchi H."/>
            <person name="Goto Y."/>
            <person name="Shimizu F."/>
            <person name="Wakebe H."/>
            <person name="Hishigaki H."/>
            <person name="Watanabe T."/>
            <person name="Sugiyama A."/>
            <person name="Takemoto M."/>
            <person name="Kawakami B."/>
            <person name="Yamazaki M."/>
            <person name="Watanabe K."/>
            <person name="Kumagai A."/>
            <person name="Itakura S."/>
            <person name="Fukuzumi Y."/>
            <person name="Fujimori Y."/>
            <person name="Komiyama M."/>
            <person name="Tashiro H."/>
            <person name="Tanigami A."/>
            <person name="Fujiwara T."/>
            <person name="Ono T."/>
            <person name="Yamada K."/>
            <person name="Fujii Y."/>
            <person name="Ozaki K."/>
            <person name="Hirao M."/>
            <person name="Ohmori Y."/>
            <person name="Kawabata A."/>
            <person name="Hikiji T."/>
            <person name="Kobatake N."/>
            <person name="Inagaki H."/>
            <person name="Ikema Y."/>
            <person name="Okamoto S."/>
            <person name="Okitani R."/>
            <person name="Kawakami T."/>
            <person name="Noguchi S."/>
            <person name="Itoh T."/>
            <person name="Shigeta K."/>
            <person name="Senba T."/>
            <person name="Matsumura K."/>
            <person name="Nakajima Y."/>
            <person name="Mizuno T."/>
            <person name="Morinaga M."/>
            <person name="Sasaki M."/>
            <person name="Togashi T."/>
            <person name="Oyama M."/>
            <person name="Hata H."/>
            <person name="Watanabe M."/>
            <person name="Komatsu T."/>
            <person name="Mizushima-Sugano J."/>
            <person name="Satoh T."/>
            <person name="Shirai Y."/>
            <person name="Takahashi Y."/>
            <person name="Nakagawa K."/>
            <person name="Okumura K."/>
            <person name="Nagase T."/>
            <person name="Nomura N."/>
            <person name="Kikuchi H."/>
            <person name="Masuho Y."/>
            <person name="Yamashita R."/>
            <person name="Nakai K."/>
            <person name="Yada T."/>
            <person name="Nakamura Y."/>
            <person name="Ohara O."/>
            <person name="Isogai T."/>
            <person name="Sugano S."/>
        </authorList>
    </citation>
    <scope>NUCLEOTIDE SEQUENCE [LARGE SCALE MRNA]</scope>
</reference>
<reference key="3">
    <citation type="submission" date="2004-06" db="EMBL/GenBank/DDBJ databases">
        <title>Cloning of human full open reading frames in Gateway(TM) system entry vector (pDONR201).</title>
        <authorList>
            <person name="Ebert L."/>
            <person name="Schick M."/>
            <person name="Neubert P."/>
            <person name="Schatten R."/>
            <person name="Henze S."/>
            <person name="Korn B."/>
        </authorList>
    </citation>
    <scope>NUCLEOTIDE SEQUENCE [LARGE SCALE MRNA]</scope>
</reference>
<reference key="4">
    <citation type="submission" date="2005-09" db="EMBL/GenBank/DDBJ databases">
        <authorList>
            <person name="Mural R.J."/>
            <person name="Istrail S."/>
            <person name="Sutton G.G."/>
            <person name="Florea L."/>
            <person name="Halpern A.L."/>
            <person name="Mobarry C.M."/>
            <person name="Lippert R."/>
            <person name="Walenz B."/>
            <person name="Shatkay H."/>
            <person name="Dew I."/>
            <person name="Miller J.R."/>
            <person name="Flanigan M.J."/>
            <person name="Edwards N.J."/>
            <person name="Bolanos R."/>
            <person name="Fasulo D."/>
            <person name="Halldorsson B.V."/>
            <person name="Hannenhalli S."/>
            <person name="Turner R."/>
            <person name="Yooseph S."/>
            <person name="Lu F."/>
            <person name="Nusskern D.R."/>
            <person name="Shue B.C."/>
            <person name="Zheng X.H."/>
            <person name="Zhong F."/>
            <person name="Delcher A.L."/>
            <person name="Huson D.H."/>
            <person name="Kravitz S.A."/>
            <person name="Mouchard L."/>
            <person name="Reinert K."/>
            <person name="Remington K.A."/>
            <person name="Clark A.G."/>
            <person name="Waterman M.S."/>
            <person name="Eichler E.E."/>
            <person name="Adams M.D."/>
            <person name="Hunkapiller M.W."/>
            <person name="Myers E.W."/>
            <person name="Venter J.C."/>
        </authorList>
    </citation>
    <scope>NUCLEOTIDE SEQUENCE [LARGE SCALE GENOMIC DNA]</scope>
</reference>
<reference key="5">
    <citation type="journal article" date="2004" name="Genome Res.">
        <title>The status, quality, and expansion of the NIH full-length cDNA project: the Mammalian Gene Collection (MGC).</title>
        <authorList>
            <consortium name="The MGC Project Team"/>
        </authorList>
    </citation>
    <scope>NUCLEOTIDE SEQUENCE [LARGE SCALE MRNA]</scope>
    <source>
        <tissue>Ovary</tissue>
    </source>
</reference>
<reference key="6">
    <citation type="journal article" date="2012" name="Am. J. Hum. Genet.">
        <title>Mutations in ROGDI cause Kohlschutter-Tonz syndrome.</title>
        <authorList>
            <person name="Schossig A."/>
            <person name="Wolf N.I."/>
            <person name="Fischer C."/>
            <person name="Fischer M."/>
            <person name="Stocker G."/>
            <person name="Pabinger S."/>
            <person name="Dander A."/>
            <person name="Steiner B."/>
            <person name="Tonz O."/>
            <person name="Kotzot D."/>
            <person name="Haberlandt E."/>
            <person name="Amberger A."/>
            <person name="Burwinkel B."/>
            <person name="Wimmer K."/>
            <person name="Fauth C."/>
            <person name="Grond-Ginsbach C."/>
            <person name="Koch M.J."/>
            <person name="Deichmann A."/>
            <person name="von Kalle C."/>
            <person name="Bartram C.R."/>
            <person name="Kohlschutter A."/>
            <person name="Trajanoski Z."/>
            <person name="Zschocke J."/>
        </authorList>
    </citation>
    <scope>INVOLVEMENT IN KTZS</scope>
</reference>
<reference key="7">
    <citation type="journal article" date="2012" name="Am. J. Hum. Genet.">
        <title>A nonsense mutation in the human homolog of Drosophila rogdi causes Kohlschutter-Tonz syndrome.</title>
        <authorList>
            <person name="Mory A."/>
            <person name="Dagan E."/>
            <person name="Illi B."/>
            <person name="Duquesnoy P."/>
            <person name="Mordechai S."/>
            <person name="Shahor I."/>
            <person name="Romani S."/>
            <person name="Hawash-Moustafa N."/>
            <person name="Mandel H."/>
            <person name="Valente E.M."/>
            <person name="Amselem S."/>
            <person name="Gershoni-Baruch R."/>
        </authorList>
    </citation>
    <scope>VARIANT KTZS 157-ARG--PHE-287 DEL</scope>
    <scope>SUBCELLULAR LOCATION</scope>
    <scope>TISSUE SPECIFICITY</scope>
</reference>
<reference key="8">
    <citation type="journal article" date="2014" name="Mol. Syndromol.">
        <title>A Novel Mutation in the ROGDI Gene in a Patient with Kohlschuetter-Toenz Syndrome.</title>
        <authorList>
            <person name="Huckert M."/>
            <person name="Mecili H."/>
            <person name="Laugel-Haushalter V."/>
            <person name="Stoetzel C."/>
            <person name="Muller J."/>
            <person name="Flori E."/>
            <person name="Laugel V."/>
            <person name="Maniere M.C."/>
            <person name="Dollfus H."/>
            <person name="Bloch-Zupan A."/>
        </authorList>
    </citation>
    <scope>VARIANT KTZS 16-GLU--LEU-34 DEL</scope>
</reference>
<reference key="9">
    <citation type="journal article" date="2018" name="Oral Surg. Oral Med. Oral Pathol. Oral Radiol.">
        <title>A novel ROGDI gene mutation is associated with Kohlschutter-Tonz syndrome.</title>
        <authorList>
            <person name="Aswath N."/>
            <person name="Ramakrishnan S.N."/>
            <person name="Teresa N."/>
            <person name="Ramanathan A."/>
        </authorList>
    </citation>
    <scope>VARIANT KTZS 134-TYR--PHE-287 DEL</scope>
</reference>
<reference key="10">
    <citation type="journal article" date="2012" name="Proc. Natl. Acad. Sci. U.S.A.">
        <title>N-terminal acetylome analyses and functional insights of the N-terminal acetyltransferase NatB.</title>
        <authorList>
            <person name="Van Damme P."/>
            <person name="Lasa M."/>
            <person name="Polevoda B."/>
            <person name="Gazquez C."/>
            <person name="Elosegui-Artola A."/>
            <person name="Kim D.S."/>
            <person name="De Juan-Pardo E."/>
            <person name="Demeyer K."/>
            <person name="Hole K."/>
            <person name="Larrea E."/>
            <person name="Timmerman E."/>
            <person name="Prieto J."/>
            <person name="Arnesen T."/>
            <person name="Sherman F."/>
            <person name="Gevaert K."/>
            <person name="Aldabe R."/>
        </authorList>
    </citation>
    <scope>ACETYLATION [LARGE SCALE ANALYSIS] AT ALA-2</scope>
    <scope>CLEAVAGE OF INITIATOR METHIONINE [LARGE SCALE ANALYSIS]</scope>
    <scope>IDENTIFICATION BY MASS SPECTROMETRY [LARGE SCALE ANALYSIS]</scope>
</reference>
<reference evidence="8 9" key="11">
    <citation type="journal article" date="2017" name="Sci. Rep.">
        <title>The crystal structure of human Rogdi provides insight into the causes of Kohlschutter-Tonz Syndrome.</title>
        <authorList>
            <person name="Lee H."/>
            <person name="Jeong H."/>
            <person name="Choe J."/>
            <person name="Jun Y."/>
            <person name="Lim C."/>
            <person name="Lee C."/>
        </authorList>
    </citation>
    <scope>X-RAY CRYSTALLOGRAPHY (2.04 ANGSTROMS) OF 11-276</scope>
    <scope>SUBUNIT</scope>
    <scope>MUTAGENESIS OF PHE-261 AND LEU-271</scope>
</reference>
<feature type="initiator methionine" description="Removed" evidence="10">
    <location>
        <position position="1"/>
    </location>
</feature>
<feature type="chain" id="PRO_0000315664" description="Protein rogdi homolog">
    <location>
        <begin position="2"/>
        <end position="287"/>
    </location>
</feature>
<feature type="modified residue" description="N-acetylalanine" evidence="10">
    <location>
        <position position="2"/>
    </location>
</feature>
<feature type="sequence variant" id="VAR_084016" description="In KTZS; uncertain significance." evidence="4">
    <location>
        <begin position="16"/>
        <end position="39"/>
    </location>
</feature>
<feature type="sequence variant" id="VAR_038273" description="In dbSNP:rs2305659.">
    <original>E</original>
    <variation>K</variation>
    <location>
        <position position="59"/>
    </location>
</feature>
<feature type="sequence variant" id="VAR_084017" description="In KTZS; uncertain significance." evidence="6">
    <location>
        <begin position="134"/>
        <end position="287"/>
    </location>
</feature>
<feature type="sequence variant" id="VAR_084018" description="In KTZS." evidence="3">
    <location>
        <begin position="157"/>
        <end position="287"/>
    </location>
</feature>
<feature type="mutagenesis site" description="Decreased protein stability." evidence="5">
    <original>F</original>
    <variation>A</variation>
    <location>
        <position position="261"/>
    </location>
</feature>
<feature type="mutagenesis site" description="Decreased protein stability." evidence="5">
    <original>L</original>
    <variation>A</variation>
    <location>
        <position position="271"/>
    </location>
</feature>
<feature type="sequence conflict" description="In Ref. 3; CAG33636." evidence="7" ref="3">
    <original>V</original>
    <variation>A</variation>
    <location>
        <position position="203"/>
    </location>
</feature>
<feature type="sequence conflict" description="In Ref. 3; CAG33636." evidence="7" ref="3">
    <original>L</original>
    <variation>P</variation>
    <location>
        <position position="265"/>
    </location>
</feature>
<feature type="helix" evidence="12">
    <location>
        <begin position="2"/>
        <end position="6"/>
    </location>
</feature>
<feature type="helix" evidence="11">
    <location>
        <begin position="26"/>
        <end position="45"/>
    </location>
</feature>
<feature type="strand" evidence="11">
    <location>
        <begin position="60"/>
        <end position="63"/>
    </location>
</feature>
<feature type="turn" evidence="12">
    <location>
        <begin position="66"/>
        <end position="68"/>
    </location>
</feature>
<feature type="strand" evidence="11">
    <location>
        <begin position="71"/>
        <end position="78"/>
    </location>
</feature>
<feature type="strand" evidence="11">
    <location>
        <begin position="81"/>
        <end position="89"/>
    </location>
</feature>
<feature type="strand" evidence="11">
    <location>
        <begin position="98"/>
        <end position="102"/>
    </location>
</feature>
<feature type="helix" evidence="11">
    <location>
        <begin position="111"/>
        <end position="128"/>
    </location>
</feature>
<feature type="helix" evidence="11">
    <location>
        <begin position="140"/>
        <end position="161"/>
    </location>
</feature>
<feature type="helix" evidence="11">
    <location>
        <begin position="168"/>
        <end position="173"/>
    </location>
</feature>
<feature type="helix" evidence="11">
    <location>
        <begin position="177"/>
        <end position="179"/>
    </location>
</feature>
<feature type="strand" evidence="11">
    <location>
        <begin position="180"/>
        <end position="182"/>
    </location>
</feature>
<feature type="strand" evidence="11">
    <location>
        <begin position="188"/>
        <end position="195"/>
    </location>
</feature>
<feature type="strand" evidence="11">
    <location>
        <begin position="198"/>
        <end position="208"/>
    </location>
</feature>
<feature type="strand" evidence="11">
    <location>
        <begin position="223"/>
        <end position="225"/>
    </location>
</feature>
<feature type="strand" evidence="11">
    <location>
        <begin position="231"/>
        <end position="234"/>
    </location>
</feature>
<feature type="strand" evidence="11">
    <location>
        <begin position="237"/>
        <end position="250"/>
    </location>
</feature>
<feature type="helix" evidence="11">
    <location>
        <begin position="252"/>
        <end position="273"/>
    </location>
</feature>
<protein>
    <recommendedName>
        <fullName>Protein rogdi homolog</fullName>
    </recommendedName>
</protein>
<evidence type="ECO:0000250" key="1">
    <source>
        <dbReference type="UniProtKB" id="Q4V7D2"/>
    </source>
</evidence>
<evidence type="ECO:0000269" key="2">
    <source>
    </source>
</evidence>
<evidence type="ECO:0000269" key="3">
    <source>
    </source>
</evidence>
<evidence type="ECO:0000269" key="4">
    <source>
    </source>
</evidence>
<evidence type="ECO:0000269" key="5">
    <source>
    </source>
</evidence>
<evidence type="ECO:0000269" key="6">
    <source>
    </source>
</evidence>
<evidence type="ECO:0000305" key="7"/>
<evidence type="ECO:0007744" key="8">
    <source>
        <dbReference type="PDB" id="5XQH"/>
    </source>
</evidence>
<evidence type="ECO:0007744" key="9">
    <source>
        <dbReference type="PDB" id="5XQI"/>
    </source>
</evidence>
<evidence type="ECO:0007744" key="10">
    <source>
    </source>
</evidence>
<evidence type="ECO:0007829" key="11">
    <source>
        <dbReference type="PDB" id="5XQH"/>
    </source>
</evidence>
<evidence type="ECO:0007829" key="12">
    <source>
        <dbReference type="PDB" id="5XQI"/>
    </source>
</evidence>
<comment type="subunit">
    <text evidence="5">Monomer.</text>
</comment>
<comment type="interaction">
    <interactant intactId="EBI-713255">
        <id>Q9GZN7</id>
    </interactant>
    <interactant intactId="EBI-11522539">
        <id>Q96MT8-3</id>
        <label>CEP63</label>
    </interactant>
    <organismsDiffer>false</organismsDiffer>
    <experiments>3</experiments>
</comment>
<comment type="subcellular location">
    <subcellularLocation>
        <location evidence="3">Nucleus envelope</location>
    </subcellularLocation>
    <subcellularLocation>
        <location evidence="1">Presynapse</location>
    </subcellularLocation>
    <subcellularLocation>
        <location evidence="1">Cell projection</location>
        <location evidence="1">Axon</location>
    </subcellularLocation>
    <subcellularLocation>
        <location evidence="1">Perikaryon</location>
    </subcellularLocation>
    <subcellularLocation>
        <location evidence="1">Cell projection</location>
        <location evidence="1">Dendrite</location>
    </subcellularLocation>
    <subcellularLocation>
        <location evidence="1">Cytoplasmic vesicle</location>
        <location evidence="1">Secretory vesicle</location>
        <location evidence="1">Synaptic vesicle</location>
    </subcellularLocation>
    <text evidence="1">Detected primarily at presynaptic sites on axons, and to a lesser degree in soma and dendrites. Not detected at post-synaptic sites.</text>
</comment>
<comment type="tissue specificity">
    <text evidence="3">Widely expressed with highest levels in spinal cord, brain, heart and bone marrow. Also expressed in fetal brain and liver.</text>
</comment>
<comment type="disease" evidence="2 3 4 6">
    <disease id="DI-03440">
        <name>Kohlschuetter-Toenz syndrome</name>
        <acronym>KTZS</acronym>
        <description>An autosomal recessive disorder characterized by severe global developmental delay, early-onset intractable seizures, spasticity, and amelogenesis imperfecta affecting both primary and secondary teeth and causing yellow or brown discoloration of the teeth. Although the phenotype is consistent, there is variability. Intellectual disability is related to the severity of seizures, and the disorder can thus be considered an epileptic encephalopathy. Some infants show normal development until seizure onset, whereas others are delayed from birth. The most severely affected individuals have profound intellectual disability, never acquire speech, and become bedridden early in life.</description>
        <dbReference type="MIM" id="226750"/>
    </disease>
    <text>The disease is caused by variants affecting the gene represented in this entry.</text>
</comment>
<comment type="similarity">
    <text evidence="7">Belongs to the rogdi family.</text>
</comment>
<proteinExistence type="evidence at protein level"/>
<keyword id="KW-0002">3D-structure</keyword>
<keyword id="KW-0007">Acetylation</keyword>
<keyword id="KW-0986">Amelogenesis imperfecta</keyword>
<keyword id="KW-0966">Cell projection</keyword>
<keyword id="KW-0968">Cytoplasmic vesicle</keyword>
<keyword id="KW-0887">Epilepsy</keyword>
<keyword id="KW-0539">Nucleus</keyword>
<keyword id="KW-1267">Proteomics identification</keyword>
<keyword id="KW-1185">Reference proteome</keyword>
<keyword id="KW-0770">Synapse</keyword>
<organism>
    <name type="scientific">Homo sapiens</name>
    <name type="common">Human</name>
    <dbReference type="NCBI Taxonomy" id="9606"/>
    <lineage>
        <taxon>Eukaryota</taxon>
        <taxon>Metazoa</taxon>
        <taxon>Chordata</taxon>
        <taxon>Craniata</taxon>
        <taxon>Vertebrata</taxon>
        <taxon>Euteleostomi</taxon>
        <taxon>Mammalia</taxon>
        <taxon>Eutheria</taxon>
        <taxon>Euarchontoglires</taxon>
        <taxon>Primates</taxon>
        <taxon>Haplorrhini</taxon>
        <taxon>Catarrhini</taxon>
        <taxon>Hominidae</taxon>
        <taxon>Homo</taxon>
    </lineage>
</organism>
<dbReference type="EMBL" id="AL136675">
    <property type="protein sequence ID" value="CAB66610.1"/>
    <property type="molecule type" value="mRNA"/>
</dbReference>
<dbReference type="EMBL" id="AK026039">
    <property type="protein sequence ID" value="BAB15331.1"/>
    <property type="molecule type" value="mRNA"/>
</dbReference>
<dbReference type="EMBL" id="CR457355">
    <property type="protein sequence ID" value="CAG33636.1"/>
    <property type="molecule type" value="mRNA"/>
</dbReference>
<dbReference type="EMBL" id="CR533547">
    <property type="protein sequence ID" value="CAG38578.1"/>
    <property type="molecule type" value="mRNA"/>
</dbReference>
<dbReference type="EMBL" id="CH471112">
    <property type="protein sequence ID" value="EAW85260.1"/>
    <property type="molecule type" value="Genomic_DNA"/>
</dbReference>
<dbReference type="EMBL" id="BC012901">
    <property type="protein sequence ID" value="AAH12901.1"/>
    <property type="molecule type" value="mRNA"/>
</dbReference>
<dbReference type="CCDS" id="CCDS10523.1"/>
<dbReference type="RefSeq" id="NP_078865.1">
    <property type="nucleotide sequence ID" value="NM_024589.3"/>
</dbReference>
<dbReference type="PDB" id="5XQH">
    <property type="method" value="X-ray"/>
    <property type="resolution" value="2.04 A"/>
    <property type="chains" value="A=11-276"/>
</dbReference>
<dbReference type="PDB" id="5XQI">
    <property type="method" value="X-ray"/>
    <property type="resolution" value="2.80 A"/>
    <property type="chains" value="A/B/C/D=1-287"/>
</dbReference>
<dbReference type="PDBsum" id="5XQH"/>
<dbReference type="PDBsum" id="5XQI"/>
<dbReference type="SMR" id="Q9GZN7"/>
<dbReference type="BioGRID" id="122769">
    <property type="interactions" value="33"/>
</dbReference>
<dbReference type="ComplexPortal" id="CPX-10301">
    <property type="entry name" value="RAVE complex, DMXL1 variant"/>
</dbReference>
<dbReference type="ComplexPortal" id="CPX-10303">
    <property type="entry name" value="RAVE complex, DMXL2 variant"/>
</dbReference>
<dbReference type="CORUM" id="Q9GZN7"/>
<dbReference type="FunCoup" id="Q9GZN7">
    <property type="interactions" value="830"/>
</dbReference>
<dbReference type="IntAct" id="Q9GZN7">
    <property type="interactions" value="23"/>
</dbReference>
<dbReference type="STRING" id="9606.ENSP00000322832"/>
<dbReference type="GlyGen" id="Q9GZN7">
    <property type="glycosylation" value="1 site, 1 O-linked glycan (1 site)"/>
</dbReference>
<dbReference type="iPTMnet" id="Q9GZN7"/>
<dbReference type="PhosphoSitePlus" id="Q9GZN7"/>
<dbReference type="BioMuta" id="ROGDI"/>
<dbReference type="DMDM" id="74733500"/>
<dbReference type="jPOST" id="Q9GZN7"/>
<dbReference type="MassIVE" id="Q9GZN7"/>
<dbReference type="PaxDb" id="9606-ENSP00000322832"/>
<dbReference type="PeptideAtlas" id="Q9GZN7"/>
<dbReference type="ProteomicsDB" id="80099"/>
<dbReference type="Pumba" id="Q9GZN7"/>
<dbReference type="Antibodypedia" id="42735">
    <property type="antibodies" value="70 antibodies from 19 providers"/>
</dbReference>
<dbReference type="DNASU" id="79641"/>
<dbReference type="Ensembl" id="ENST00000322048.12">
    <property type="protein sequence ID" value="ENSP00000322832.6"/>
    <property type="gene ID" value="ENSG00000067836.13"/>
</dbReference>
<dbReference type="GeneID" id="79641"/>
<dbReference type="KEGG" id="hsa:79641"/>
<dbReference type="MANE-Select" id="ENST00000322048.12">
    <property type="protein sequence ID" value="ENSP00000322832.6"/>
    <property type="RefSeq nucleotide sequence ID" value="NM_024589.3"/>
    <property type="RefSeq protein sequence ID" value="NP_078865.1"/>
</dbReference>
<dbReference type="UCSC" id="uc002cxv.5">
    <property type="organism name" value="human"/>
</dbReference>
<dbReference type="AGR" id="HGNC:29478"/>
<dbReference type="CTD" id="79641"/>
<dbReference type="DisGeNET" id="79641"/>
<dbReference type="GeneCards" id="ROGDI"/>
<dbReference type="HGNC" id="HGNC:29478">
    <property type="gene designation" value="ROGDI"/>
</dbReference>
<dbReference type="HPA" id="ENSG00000067836">
    <property type="expression patterns" value="Low tissue specificity"/>
</dbReference>
<dbReference type="MalaCards" id="ROGDI"/>
<dbReference type="MIM" id="226750">
    <property type="type" value="phenotype"/>
</dbReference>
<dbReference type="MIM" id="614574">
    <property type="type" value="gene"/>
</dbReference>
<dbReference type="neXtProt" id="NX_Q9GZN7"/>
<dbReference type="OpenTargets" id="ENSG00000067836"/>
<dbReference type="Orphanet" id="1946">
    <property type="disease" value="Amelocerebrohypohidrotic syndrome"/>
</dbReference>
<dbReference type="PharmGKB" id="PA143485597"/>
<dbReference type="VEuPathDB" id="HostDB:ENSG00000067836"/>
<dbReference type="eggNOG" id="KOG3992">
    <property type="taxonomic scope" value="Eukaryota"/>
</dbReference>
<dbReference type="GeneTree" id="ENSGT00390000007164"/>
<dbReference type="HOGENOM" id="CLU_062094_0_1_1"/>
<dbReference type="InParanoid" id="Q9GZN7"/>
<dbReference type="OMA" id="NILMECA"/>
<dbReference type="OrthoDB" id="66510at2759"/>
<dbReference type="PAN-GO" id="Q9GZN7">
    <property type="GO annotations" value="1 GO annotation based on evolutionary models"/>
</dbReference>
<dbReference type="PhylomeDB" id="Q9GZN7"/>
<dbReference type="TreeFam" id="TF105859"/>
<dbReference type="PathwayCommons" id="Q9GZN7"/>
<dbReference type="SignaLink" id="Q9GZN7"/>
<dbReference type="BioGRID-ORCS" id="79641">
    <property type="hits" value="15 hits in 1157 CRISPR screens"/>
</dbReference>
<dbReference type="CD-CODE" id="FB4E32DD">
    <property type="entry name" value="Presynaptic clusters and postsynaptic densities"/>
</dbReference>
<dbReference type="GenomeRNAi" id="79641"/>
<dbReference type="Pharos" id="Q9GZN7">
    <property type="development level" value="Tbio"/>
</dbReference>
<dbReference type="PRO" id="PR:Q9GZN7"/>
<dbReference type="Proteomes" id="UP000005640">
    <property type="component" value="Chromosome 16"/>
</dbReference>
<dbReference type="RNAct" id="Q9GZN7">
    <property type="molecule type" value="protein"/>
</dbReference>
<dbReference type="Bgee" id="ENSG00000067836">
    <property type="expression patterns" value="Expressed in right hemisphere of cerebellum and 176 other cell types or tissues"/>
</dbReference>
<dbReference type="ExpressionAtlas" id="Q9GZN7">
    <property type="expression patterns" value="baseline and differential"/>
</dbReference>
<dbReference type="GO" id="GO:0030424">
    <property type="term" value="C:axon"/>
    <property type="evidence" value="ECO:0007669"/>
    <property type="project" value="UniProtKB-SubCell"/>
</dbReference>
<dbReference type="GO" id="GO:0030425">
    <property type="term" value="C:dendrite"/>
    <property type="evidence" value="ECO:0007669"/>
    <property type="project" value="UniProtKB-SubCell"/>
</dbReference>
<dbReference type="GO" id="GO:0098686">
    <property type="term" value="C:hippocampal mossy fiber to CA3 synapse"/>
    <property type="evidence" value="ECO:0007669"/>
    <property type="project" value="Ensembl"/>
</dbReference>
<dbReference type="GO" id="GO:0005635">
    <property type="term" value="C:nuclear envelope"/>
    <property type="evidence" value="ECO:0000314"/>
    <property type="project" value="HGNC"/>
</dbReference>
<dbReference type="GO" id="GO:0043204">
    <property type="term" value="C:perikaryon"/>
    <property type="evidence" value="ECO:0007669"/>
    <property type="project" value="UniProtKB-SubCell"/>
</dbReference>
<dbReference type="GO" id="GO:0043291">
    <property type="term" value="C:RAVE complex"/>
    <property type="evidence" value="ECO:0000318"/>
    <property type="project" value="GO_Central"/>
</dbReference>
<dbReference type="GO" id="GO:0008021">
    <property type="term" value="C:synaptic vesicle"/>
    <property type="evidence" value="ECO:0007669"/>
    <property type="project" value="UniProtKB-SubCell"/>
</dbReference>
<dbReference type="GO" id="GO:0030282">
    <property type="term" value="P:bone mineralization"/>
    <property type="evidence" value="ECO:0007669"/>
    <property type="project" value="Ensembl"/>
</dbReference>
<dbReference type="GO" id="GO:0007420">
    <property type="term" value="P:brain development"/>
    <property type="evidence" value="ECO:0000315"/>
    <property type="project" value="HGNC"/>
</dbReference>
<dbReference type="GO" id="GO:0070166">
    <property type="term" value="P:enamel mineralization"/>
    <property type="evidence" value="ECO:0007669"/>
    <property type="project" value="Ensembl"/>
</dbReference>
<dbReference type="GO" id="GO:0010467">
    <property type="term" value="P:gene expression"/>
    <property type="evidence" value="ECO:0007669"/>
    <property type="project" value="Ensembl"/>
</dbReference>
<dbReference type="GO" id="GO:0030097">
    <property type="term" value="P:hemopoiesis"/>
    <property type="evidence" value="ECO:0007669"/>
    <property type="project" value="Ensembl"/>
</dbReference>
<dbReference type="GO" id="GO:0040011">
    <property type="term" value="P:locomotion"/>
    <property type="evidence" value="ECO:0007669"/>
    <property type="project" value="Ensembl"/>
</dbReference>
<dbReference type="GO" id="GO:0045475">
    <property type="term" value="P:locomotor rhythm"/>
    <property type="evidence" value="ECO:0007669"/>
    <property type="project" value="Ensembl"/>
</dbReference>
<dbReference type="GO" id="GO:0007613">
    <property type="term" value="P:memory"/>
    <property type="evidence" value="ECO:0007669"/>
    <property type="project" value="Ensembl"/>
</dbReference>
<dbReference type="GO" id="GO:0022008">
    <property type="term" value="P:neurogenesis"/>
    <property type="evidence" value="ECO:0000315"/>
    <property type="project" value="HGNC"/>
</dbReference>
<dbReference type="GO" id="GO:0050905">
    <property type="term" value="P:neuromuscular process"/>
    <property type="evidence" value="ECO:0007669"/>
    <property type="project" value="Ensembl"/>
</dbReference>
<dbReference type="GO" id="GO:0042475">
    <property type="term" value="P:odontogenesis of dentin-containing tooth"/>
    <property type="evidence" value="ECO:0000315"/>
    <property type="project" value="HGNC"/>
</dbReference>
<dbReference type="GO" id="GO:0045851">
    <property type="term" value="P:pH reduction"/>
    <property type="evidence" value="ECO:0007669"/>
    <property type="project" value="Ensembl"/>
</dbReference>
<dbReference type="GO" id="GO:0008284">
    <property type="term" value="P:positive regulation of cell population proliferation"/>
    <property type="evidence" value="ECO:0007669"/>
    <property type="project" value="Ensembl"/>
</dbReference>
<dbReference type="GO" id="GO:0009410">
    <property type="term" value="P:response to xenobiotic stimulus"/>
    <property type="evidence" value="ECO:0007669"/>
    <property type="project" value="Ensembl"/>
</dbReference>
<dbReference type="InterPro" id="IPR028241">
    <property type="entry name" value="RAVE2/Rogdi"/>
</dbReference>
<dbReference type="PANTHER" id="PTHR13618">
    <property type="entry name" value="LEUCINE ZIPPER CONTAINING TRANSCRIPTION FACTOR LZF1"/>
    <property type="match status" value="1"/>
</dbReference>
<dbReference type="PANTHER" id="PTHR13618:SF1">
    <property type="entry name" value="PROTEIN ROGDI HOMOLOG"/>
    <property type="match status" value="1"/>
</dbReference>
<dbReference type="Pfam" id="PF10259">
    <property type="entry name" value="Rogdi_lz"/>
    <property type="match status" value="1"/>
</dbReference>
<accession>Q9GZN7</accession>
<accession>Q6IA00</accession>
<name>ROGDI_HUMAN</name>
<sequence length="287" mass="32254">MATVMAATAAERAVLEEEFRWLLHDEVHAVLKQLQDILKEASLRFTLPGSGTEGPAKQENFILGSCGTDQVKGVLTLQGDALSQADVNLKMPRNNQLLHFAFREDKQWKLQQIQDARNHVSQAIYLLTSRDQSYQFKTGAEVLKLMDAVMLQLTRARNRLTTPATLTLPEIAASGLTRMFAPALPSDLLVNVYINLNKLCLTVYQLHALQPNSTKNFRPAGGAVLHSPGAMFEWGSQRLEVSHVHKVECVIPWLNDALVYFTVSLQLCQQLKDKISVFSSYWSYRPF</sequence>
<gene>
    <name type="primary">ROGDI</name>
</gene>